<gene>
    <name evidence="2" type="primary">purD</name>
    <name type="ordered locus">YPO3729</name>
    <name type="ordered locus">y0501</name>
    <name type="ordered locus">YP_3092</name>
</gene>
<name>PUR2_YERPE</name>
<evidence type="ECO:0000250" key="1"/>
<evidence type="ECO:0000255" key="2">
    <source>
        <dbReference type="HAMAP-Rule" id="MF_00138"/>
    </source>
</evidence>
<evidence type="ECO:0000305" key="3"/>
<evidence type="ECO:0007829" key="4">
    <source>
        <dbReference type="PDB" id="3MJF"/>
    </source>
</evidence>
<proteinExistence type="evidence at protein level"/>
<sequence length="428" mass="45317">MNILIIGNGGREHALGWKAAQSPLADKIYVAPGNAGTALEPTLENVDIAATDIAGLLAFAQSHDIGLTIVGPEAPLVIGVVDAFRAAGLAIFGPTQAAAQLEGSKAFTKDFLARHNIPSAEYQNFTDVEAALAYVRQKGAPIVIKADGLAAGKGVIVAMTQEEAETAVNDMLAGNAFGDAGHRIVVEEFLDGEEASFIVMVDGENVLPMATSQDHKRVGDGDTGPNTGGMGAYSPAPVVTDDVHQRVMDQVIWPTVRGMAAEGNIYTGFLYAGLMISADGQPKVIEFNCRFGDPETQPIMLRMRSDLVELCLAGTQGKLNEKTSDWDERPSLGVVLAAGGYPADYRQGDVIHGLPQQEVKDGKVFHAGTKLNGNHEVVTNGGRVLCVTALGETVAQAQQYAYQLAEGIQWEGVFCRKDIGYRAIARGK</sequence>
<keyword id="KW-0002">3D-structure</keyword>
<keyword id="KW-0067">ATP-binding</keyword>
<keyword id="KW-0436">Ligase</keyword>
<keyword id="KW-0460">Magnesium</keyword>
<keyword id="KW-0464">Manganese</keyword>
<keyword id="KW-0479">Metal-binding</keyword>
<keyword id="KW-0547">Nucleotide-binding</keyword>
<keyword id="KW-0658">Purine biosynthesis</keyword>
<keyword id="KW-1185">Reference proteome</keyword>
<organism>
    <name type="scientific">Yersinia pestis</name>
    <dbReference type="NCBI Taxonomy" id="632"/>
    <lineage>
        <taxon>Bacteria</taxon>
        <taxon>Pseudomonadati</taxon>
        <taxon>Pseudomonadota</taxon>
        <taxon>Gammaproteobacteria</taxon>
        <taxon>Enterobacterales</taxon>
        <taxon>Yersiniaceae</taxon>
        <taxon>Yersinia</taxon>
    </lineage>
</organism>
<reference key="1">
    <citation type="journal article" date="2001" name="Nature">
        <title>Genome sequence of Yersinia pestis, the causative agent of plague.</title>
        <authorList>
            <person name="Parkhill J."/>
            <person name="Wren B.W."/>
            <person name="Thomson N.R."/>
            <person name="Titball R.W."/>
            <person name="Holden M.T.G."/>
            <person name="Prentice M.B."/>
            <person name="Sebaihia M."/>
            <person name="James K.D."/>
            <person name="Churcher C.M."/>
            <person name="Mungall K.L."/>
            <person name="Baker S."/>
            <person name="Basham D."/>
            <person name="Bentley S.D."/>
            <person name="Brooks K."/>
            <person name="Cerdeno-Tarraga A.-M."/>
            <person name="Chillingworth T."/>
            <person name="Cronin A."/>
            <person name="Davies R.M."/>
            <person name="Davis P."/>
            <person name="Dougan G."/>
            <person name="Feltwell T."/>
            <person name="Hamlin N."/>
            <person name="Holroyd S."/>
            <person name="Jagels K."/>
            <person name="Karlyshev A.V."/>
            <person name="Leather S."/>
            <person name="Moule S."/>
            <person name="Oyston P.C.F."/>
            <person name="Quail M.A."/>
            <person name="Rutherford K.M."/>
            <person name="Simmonds M."/>
            <person name="Skelton J."/>
            <person name="Stevens K."/>
            <person name="Whitehead S."/>
            <person name="Barrell B.G."/>
        </authorList>
    </citation>
    <scope>NUCLEOTIDE SEQUENCE [LARGE SCALE GENOMIC DNA]</scope>
    <source>
        <strain>CO-92 / Biovar Orientalis</strain>
    </source>
</reference>
<reference key="2">
    <citation type="journal article" date="2002" name="J. Bacteriol.">
        <title>Genome sequence of Yersinia pestis KIM.</title>
        <authorList>
            <person name="Deng W."/>
            <person name="Burland V."/>
            <person name="Plunkett G. III"/>
            <person name="Boutin A."/>
            <person name="Mayhew G.F."/>
            <person name="Liss P."/>
            <person name="Perna N.T."/>
            <person name="Rose D.J."/>
            <person name="Mau B."/>
            <person name="Zhou S."/>
            <person name="Schwartz D.C."/>
            <person name="Fetherston J.D."/>
            <person name="Lindler L.E."/>
            <person name="Brubaker R.R."/>
            <person name="Plano G.V."/>
            <person name="Straley S.C."/>
            <person name="McDonough K.A."/>
            <person name="Nilles M.L."/>
            <person name="Matson J.S."/>
            <person name="Blattner F.R."/>
            <person name="Perry R.D."/>
        </authorList>
    </citation>
    <scope>NUCLEOTIDE SEQUENCE [LARGE SCALE GENOMIC DNA]</scope>
    <source>
        <strain>KIM10+ / Biovar Mediaevalis</strain>
    </source>
</reference>
<reference key="3">
    <citation type="journal article" date="2004" name="DNA Res.">
        <title>Complete genome sequence of Yersinia pestis strain 91001, an isolate avirulent to humans.</title>
        <authorList>
            <person name="Song Y."/>
            <person name="Tong Z."/>
            <person name="Wang J."/>
            <person name="Wang L."/>
            <person name="Guo Z."/>
            <person name="Han Y."/>
            <person name="Zhang J."/>
            <person name="Pei D."/>
            <person name="Zhou D."/>
            <person name="Qin H."/>
            <person name="Pang X."/>
            <person name="Han Y."/>
            <person name="Zhai J."/>
            <person name="Li M."/>
            <person name="Cui B."/>
            <person name="Qi Z."/>
            <person name="Jin L."/>
            <person name="Dai R."/>
            <person name="Chen F."/>
            <person name="Li S."/>
            <person name="Ye C."/>
            <person name="Du Z."/>
            <person name="Lin W."/>
            <person name="Wang J."/>
            <person name="Yu J."/>
            <person name="Yang H."/>
            <person name="Wang J."/>
            <person name="Huang P."/>
            <person name="Yang R."/>
        </authorList>
    </citation>
    <scope>NUCLEOTIDE SEQUENCE [LARGE SCALE GENOMIC DNA]</scope>
    <source>
        <strain>91001 / Biovar Mediaevalis</strain>
    </source>
</reference>
<comment type="catalytic activity">
    <reaction evidence="2">
        <text>5-phospho-beta-D-ribosylamine + glycine + ATP = N(1)-(5-phospho-beta-D-ribosyl)glycinamide + ADP + phosphate + H(+)</text>
        <dbReference type="Rhea" id="RHEA:17453"/>
        <dbReference type="ChEBI" id="CHEBI:15378"/>
        <dbReference type="ChEBI" id="CHEBI:30616"/>
        <dbReference type="ChEBI" id="CHEBI:43474"/>
        <dbReference type="ChEBI" id="CHEBI:57305"/>
        <dbReference type="ChEBI" id="CHEBI:58681"/>
        <dbReference type="ChEBI" id="CHEBI:143788"/>
        <dbReference type="ChEBI" id="CHEBI:456216"/>
        <dbReference type="EC" id="6.3.4.13"/>
    </reaction>
</comment>
<comment type="cofactor">
    <cofactor evidence="1">
        <name>Mg(2+)</name>
        <dbReference type="ChEBI" id="CHEBI:18420"/>
    </cofactor>
    <cofactor evidence="1">
        <name>Mn(2+)</name>
        <dbReference type="ChEBI" id="CHEBI:29035"/>
    </cofactor>
    <text evidence="1">Binds 1 Mg(2+) or Mn(2+) ion per subunit.</text>
</comment>
<comment type="pathway">
    <text evidence="2">Purine metabolism; IMP biosynthesis via de novo pathway; N(1)-(5-phospho-D-ribosyl)glycinamide from 5-phospho-alpha-D-ribose 1-diphosphate: step 2/2.</text>
</comment>
<comment type="similarity">
    <text evidence="2">Belongs to the GARS family.</text>
</comment>
<comment type="sequence caution" evidence="3">
    <conflict type="erroneous initiation">
        <sequence resource="EMBL-CDS" id="AAM84090"/>
    </conflict>
</comment>
<comment type="sequence caution" evidence="3">
    <conflict type="erroneous initiation">
        <sequence resource="EMBL-CDS" id="AAS63262"/>
    </conflict>
</comment>
<dbReference type="EC" id="6.3.4.13" evidence="2"/>
<dbReference type="EMBL" id="AL590842">
    <property type="protein sequence ID" value="CAL22316.1"/>
    <property type="molecule type" value="Genomic_DNA"/>
</dbReference>
<dbReference type="EMBL" id="AE009952">
    <property type="protein sequence ID" value="AAM84090.1"/>
    <property type="status" value="ALT_INIT"/>
    <property type="molecule type" value="Genomic_DNA"/>
</dbReference>
<dbReference type="EMBL" id="AE017042">
    <property type="protein sequence ID" value="AAS63262.1"/>
    <property type="status" value="ALT_INIT"/>
    <property type="molecule type" value="Genomic_DNA"/>
</dbReference>
<dbReference type="PIR" id="AI0453">
    <property type="entry name" value="AI0453"/>
</dbReference>
<dbReference type="RefSeq" id="WP_002210691.1">
    <property type="nucleotide sequence ID" value="NZ_WUCM01000097.1"/>
</dbReference>
<dbReference type="RefSeq" id="YP_002348609.1">
    <property type="nucleotide sequence ID" value="NC_003143.1"/>
</dbReference>
<dbReference type="PDB" id="3MJF">
    <property type="method" value="X-ray"/>
    <property type="resolution" value="1.47 A"/>
    <property type="chains" value="A=1-428"/>
</dbReference>
<dbReference type="PDBsum" id="3MJF"/>
<dbReference type="SMR" id="Q8ZAR2"/>
<dbReference type="IntAct" id="Q8ZAR2">
    <property type="interactions" value="6"/>
</dbReference>
<dbReference type="STRING" id="214092.YPO3729"/>
<dbReference type="PaxDb" id="214092-YPO3729"/>
<dbReference type="DNASU" id="1145448"/>
<dbReference type="EnsemblBacteria" id="AAS63262">
    <property type="protein sequence ID" value="AAS63262"/>
    <property type="gene ID" value="YP_3092"/>
</dbReference>
<dbReference type="GeneID" id="57974988"/>
<dbReference type="KEGG" id="ype:YPO3729"/>
<dbReference type="KEGG" id="ypk:y0501"/>
<dbReference type="KEGG" id="ypm:YP_3092"/>
<dbReference type="PATRIC" id="fig|214092.21.peg.4247"/>
<dbReference type="eggNOG" id="COG0151">
    <property type="taxonomic scope" value="Bacteria"/>
</dbReference>
<dbReference type="HOGENOM" id="CLU_027420_3_1_6"/>
<dbReference type="OMA" id="KATVCKY"/>
<dbReference type="OrthoDB" id="9807240at2"/>
<dbReference type="UniPathway" id="UPA00074">
    <property type="reaction ID" value="UER00125"/>
</dbReference>
<dbReference type="EvolutionaryTrace" id="Q8ZAR2"/>
<dbReference type="Proteomes" id="UP000000815">
    <property type="component" value="Chromosome"/>
</dbReference>
<dbReference type="Proteomes" id="UP000001019">
    <property type="component" value="Chromosome"/>
</dbReference>
<dbReference type="Proteomes" id="UP000002490">
    <property type="component" value="Chromosome"/>
</dbReference>
<dbReference type="GO" id="GO:0005524">
    <property type="term" value="F:ATP binding"/>
    <property type="evidence" value="ECO:0007669"/>
    <property type="project" value="UniProtKB-KW"/>
</dbReference>
<dbReference type="GO" id="GO:0046872">
    <property type="term" value="F:metal ion binding"/>
    <property type="evidence" value="ECO:0007669"/>
    <property type="project" value="UniProtKB-KW"/>
</dbReference>
<dbReference type="GO" id="GO:0004637">
    <property type="term" value="F:phosphoribosylamine-glycine ligase activity"/>
    <property type="evidence" value="ECO:0007669"/>
    <property type="project" value="UniProtKB-UniRule"/>
</dbReference>
<dbReference type="GO" id="GO:0006189">
    <property type="term" value="P:'de novo' IMP biosynthetic process"/>
    <property type="evidence" value="ECO:0007669"/>
    <property type="project" value="UniProtKB-UniRule"/>
</dbReference>
<dbReference type="GO" id="GO:0009113">
    <property type="term" value="P:purine nucleobase biosynthetic process"/>
    <property type="evidence" value="ECO:0007669"/>
    <property type="project" value="InterPro"/>
</dbReference>
<dbReference type="FunFam" id="3.30.470.20:FF:000031">
    <property type="entry name" value="Phosphoribosylamine--glycine ligase"/>
    <property type="match status" value="1"/>
</dbReference>
<dbReference type="FunFam" id="3.40.50.20:FF:000006">
    <property type="entry name" value="Phosphoribosylamine--glycine ligase, chloroplastic"/>
    <property type="match status" value="1"/>
</dbReference>
<dbReference type="FunFam" id="3.30.1490.20:FF:000006">
    <property type="entry name" value="phosphoribosylamine--glycine ligase, chloroplastic-like"/>
    <property type="match status" value="1"/>
</dbReference>
<dbReference type="FunFam" id="3.90.600.10:FF:000001">
    <property type="entry name" value="Trifunctional purine biosynthetic protein adenosine-3"/>
    <property type="match status" value="1"/>
</dbReference>
<dbReference type="Gene3D" id="3.40.50.20">
    <property type="match status" value="1"/>
</dbReference>
<dbReference type="Gene3D" id="3.30.1490.20">
    <property type="entry name" value="ATP-grasp fold, A domain"/>
    <property type="match status" value="1"/>
</dbReference>
<dbReference type="Gene3D" id="3.30.470.20">
    <property type="entry name" value="ATP-grasp fold, B domain"/>
    <property type="match status" value="1"/>
</dbReference>
<dbReference type="Gene3D" id="3.90.600.10">
    <property type="entry name" value="Phosphoribosylglycinamide synthetase, C-terminal domain"/>
    <property type="match status" value="1"/>
</dbReference>
<dbReference type="HAMAP" id="MF_00138">
    <property type="entry name" value="GARS"/>
    <property type="match status" value="1"/>
</dbReference>
<dbReference type="InterPro" id="IPR011761">
    <property type="entry name" value="ATP-grasp"/>
</dbReference>
<dbReference type="InterPro" id="IPR013815">
    <property type="entry name" value="ATP_grasp_subdomain_1"/>
</dbReference>
<dbReference type="InterPro" id="IPR016185">
    <property type="entry name" value="PreATP-grasp_dom_sf"/>
</dbReference>
<dbReference type="InterPro" id="IPR020561">
    <property type="entry name" value="PRibGlycinamid_synth_ATP-grasp"/>
</dbReference>
<dbReference type="InterPro" id="IPR000115">
    <property type="entry name" value="PRibGlycinamide_synth"/>
</dbReference>
<dbReference type="InterPro" id="IPR020560">
    <property type="entry name" value="PRibGlycinamide_synth_C-dom"/>
</dbReference>
<dbReference type="InterPro" id="IPR037123">
    <property type="entry name" value="PRibGlycinamide_synth_C_sf"/>
</dbReference>
<dbReference type="InterPro" id="IPR020559">
    <property type="entry name" value="PRibGlycinamide_synth_CS"/>
</dbReference>
<dbReference type="InterPro" id="IPR020562">
    <property type="entry name" value="PRibGlycinamide_synth_N"/>
</dbReference>
<dbReference type="InterPro" id="IPR011054">
    <property type="entry name" value="Rudment_hybrid_motif"/>
</dbReference>
<dbReference type="NCBIfam" id="TIGR00877">
    <property type="entry name" value="purD"/>
    <property type="match status" value="1"/>
</dbReference>
<dbReference type="PANTHER" id="PTHR43472">
    <property type="entry name" value="PHOSPHORIBOSYLAMINE--GLYCINE LIGASE"/>
    <property type="match status" value="1"/>
</dbReference>
<dbReference type="PANTHER" id="PTHR43472:SF1">
    <property type="entry name" value="PHOSPHORIBOSYLAMINE--GLYCINE LIGASE, CHLOROPLASTIC"/>
    <property type="match status" value="1"/>
</dbReference>
<dbReference type="Pfam" id="PF01071">
    <property type="entry name" value="GARS_A"/>
    <property type="match status" value="1"/>
</dbReference>
<dbReference type="Pfam" id="PF02843">
    <property type="entry name" value="GARS_C"/>
    <property type="match status" value="1"/>
</dbReference>
<dbReference type="Pfam" id="PF02844">
    <property type="entry name" value="GARS_N"/>
    <property type="match status" value="1"/>
</dbReference>
<dbReference type="SMART" id="SM01209">
    <property type="entry name" value="GARS_A"/>
    <property type="match status" value="1"/>
</dbReference>
<dbReference type="SMART" id="SM01210">
    <property type="entry name" value="GARS_C"/>
    <property type="match status" value="1"/>
</dbReference>
<dbReference type="SUPFAM" id="SSF56059">
    <property type="entry name" value="Glutathione synthetase ATP-binding domain-like"/>
    <property type="match status" value="1"/>
</dbReference>
<dbReference type="SUPFAM" id="SSF52440">
    <property type="entry name" value="PreATP-grasp domain"/>
    <property type="match status" value="1"/>
</dbReference>
<dbReference type="SUPFAM" id="SSF51246">
    <property type="entry name" value="Rudiment single hybrid motif"/>
    <property type="match status" value="1"/>
</dbReference>
<dbReference type="PROSITE" id="PS50975">
    <property type="entry name" value="ATP_GRASP"/>
    <property type="match status" value="1"/>
</dbReference>
<dbReference type="PROSITE" id="PS00184">
    <property type="entry name" value="GARS"/>
    <property type="match status" value="1"/>
</dbReference>
<feature type="chain" id="PRO_0000151506" description="Phosphoribosylamine--glycine ligase">
    <location>
        <begin position="1"/>
        <end position="428"/>
    </location>
</feature>
<feature type="domain" description="ATP-grasp" evidence="2">
    <location>
        <begin position="109"/>
        <end position="316"/>
    </location>
</feature>
<feature type="binding site" evidence="2">
    <location>
        <begin position="135"/>
        <end position="196"/>
    </location>
    <ligand>
        <name>ATP</name>
        <dbReference type="ChEBI" id="CHEBI:30616"/>
    </ligand>
</feature>
<feature type="binding site" evidence="2">
    <location>
        <position position="286"/>
    </location>
    <ligand>
        <name>Mg(2+)</name>
        <dbReference type="ChEBI" id="CHEBI:18420"/>
    </ligand>
</feature>
<feature type="binding site" evidence="2">
    <location>
        <position position="288"/>
    </location>
    <ligand>
        <name>Mg(2+)</name>
        <dbReference type="ChEBI" id="CHEBI:18420"/>
    </ligand>
</feature>
<feature type="strand" evidence="4">
    <location>
        <begin position="1"/>
        <end position="7"/>
    </location>
</feature>
<feature type="helix" evidence="4">
    <location>
        <begin position="10"/>
        <end position="19"/>
    </location>
</feature>
<feature type="strand" evidence="4">
    <location>
        <begin position="25"/>
        <end position="32"/>
    </location>
</feature>
<feature type="helix" evidence="4">
    <location>
        <begin position="35"/>
        <end position="39"/>
    </location>
</feature>
<feature type="helix" evidence="4">
    <location>
        <begin position="53"/>
        <end position="62"/>
    </location>
</feature>
<feature type="strand" evidence="4">
    <location>
        <begin position="65"/>
        <end position="70"/>
    </location>
</feature>
<feature type="helix" evidence="4">
    <location>
        <begin position="73"/>
        <end position="77"/>
    </location>
</feature>
<feature type="helix" evidence="4">
    <location>
        <begin position="80"/>
        <end position="86"/>
    </location>
</feature>
<feature type="strand" evidence="4">
    <location>
        <begin position="91"/>
        <end position="93"/>
    </location>
</feature>
<feature type="helix" evidence="4">
    <location>
        <begin position="96"/>
        <end position="103"/>
    </location>
</feature>
<feature type="helix" evidence="4">
    <location>
        <begin position="105"/>
        <end position="114"/>
    </location>
</feature>
<feature type="strand" evidence="4">
    <location>
        <begin position="122"/>
        <end position="126"/>
    </location>
</feature>
<feature type="helix" evidence="4">
    <location>
        <begin position="128"/>
        <end position="138"/>
    </location>
</feature>
<feature type="strand" evidence="4">
    <location>
        <begin position="140"/>
        <end position="149"/>
    </location>
</feature>
<feature type="strand" evidence="4">
    <location>
        <begin position="154"/>
        <end position="158"/>
    </location>
</feature>
<feature type="helix" evidence="4">
    <location>
        <begin position="161"/>
        <end position="172"/>
    </location>
</feature>
<feature type="helix" evidence="4">
    <location>
        <begin position="175"/>
        <end position="178"/>
    </location>
</feature>
<feature type="strand" evidence="4">
    <location>
        <begin position="184"/>
        <end position="188"/>
    </location>
</feature>
<feature type="strand" evidence="4">
    <location>
        <begin position="192"/>
        <end position="204"/>
    </location>
</feature>
<feature type="strand" evidence="4">
    <location>
        <begin position="206"/>
        <end position="208"/>
    </location>
</feature>
<feature type="strand" evidence="4">
    <location>
        <begin position="212"/>
        <end position="214"/>
    </location>
</feature>
<feature type="strand" evidence="4">
    <location>
        <begin position="217"/>
        <end position="219"/>
    </location>
</feature>
<feature type="turn" evidence="4">
    <location>
        <begin position="220"/>
        <end position="222"/>
    </location>
</feature>
<feature type="strand" evidence="4">
    <location>
        <begin position="223"/>
        <end position="226"/>
    </location>
</feature>
<feature type="strand" evidence="4">
    <location>
        <begin position="230"/>
        <end position="235"/>
    </location>
</feature>
<feature type="helix" evidence="4">
    <location>
        <begin position="241"/>
        <end position="250"/>
    </location>
</feature>
<feature type="helix" evidence="4">
    <location>
        <begin position="252"/>
        <end position="261"/>
    </location>
</feature>
<feature type="strand" evidence="4">
    <location>
        <begin position="267"/>
        <end position="276"/>
    </location>
</feature>
<feature type="strand" evidence="4">
    <location>
        <begin position="282"/>
        <end position="287"/>
    </location>
</feature>
<feature type="helix" evidence="4">
    <location>
        <begin position="289"/>
        <end position="291"/>
    </location>
</feature>
<feature type="turn" evidence="4">
    <location>
        <begin position="293"/>
        <end position="295"/>
    </location>
</feature>
<feature type="helix" evidence="4">
    <location>
        <begin position="296"/>
        <end position="302"/>
    </location>
</feature>
<feature type="helix" evidence="4">
    <location>
        <begin position="307"/>
        <end position="315"/>
    </location>
</feature>
<feature type="helix" evidence="4">
    <location>
        <begin position="319"/>
        <end position="321"/>
    </location>
</feature>
<feature type="strand" evidence="4">
    <location>
        <begin position="331"/>
        <end position="338"/>
    </location>
</feature>
<feature type="turn" evidence="4">
    <location>
        <begin position="339"/>
        <end position="342"/>
    </location>
</feature>
<feature type="strand" evidence="4">
    <location>
        <begin position="362"/>
        <end position="371"/>
    </location>
</feature>
<feature type="strand" evidence="4">
    <location>
        <begin position="377"/>
        <end position="379"/>
    </location>
</feature>
<feature type="strand" evidence="4">
    <location>
        <begin position="381"/>
        <end position="390"/>
    </location>
</feature>
<feature type="helix" evidence="4">
    <location>
        <begin position="394"/>
        <end position="405"/>
    </location>
</feature>
<feature type="helix" evidence="4">
    <location>
        <begin position="421"/>
        <end position="424"/>
    </location>
</feature>
<feature type="turn" evidence="4">
    <location>
        <begin position="425"/>
        <end position="427"/>
    </location>
</feature>
<protein>
    <recommendedName>
        <fullName evidence="2">Phosphoribosylamine--glycine ligase</fullName>
        <ecNumber evidence="2">6.3.4.13</ecNumber>
    </recommendedName>
    <alternativeName>
        <fullName evidence="2">GARS</fullName>
    </alternativeName>
    <alternativeName>
        <fullName evidence="2">Glycinamide ribonucleotide synthetase</fullName>
    </alternativeName>
    <alternativeName>
        <fullName evidence="2">Phosphoribosylglycinamide synthetase</fullName>
    </alternativeName>
</protein>
<accession>Q8ZAR2</accession>
<accession>Q0WAS9</accession>